<organism>
    <name type="scientific">Teredinibacter turnerae (strain ATCC 39867 / T7901)</name>
    <dbReference type="NCBI Taxonomy" id="377629"/>
    <lineage>
        <taxon>Bacteria</taxon>
        <taxon>Pseudomonadati</taxon>
        <taxon>Pseudomonadota</taxon>
        <taxon>Gammaproteobacteria</taxon>
        <taxon>Cellvibrionales</taxon>
        <taxon>Cellvibrionaceae</taxon>
        <taxon>Teredinibacter</taxon>
    </lineage>
</organism>
<proteinExistence type="inferred from homology"/>
<dbReference type="EC" id="3.6.1.27" evidence="1"/>
<dbReference type="EMBL" id="CP001614">
    <property type="protein sequence ID" value="ACR13919.1"/>
    <property type="molecule type" value="Genomic_DNA"/>
</dbReference>
<dbReference type="RefSeq" id="WP_015820034.1">
    <property type="nucleotide sequence ID" value="NC_012997.1"/>
</dbReference>
<dbReference type="SMR" id="C5BRP6"/>
<dbReference type="STRING" id="377629.TERTU_1199"/>
<dbReference type="KEGG" id="ttu:TERTU_1199"/>
<dbReference type="eggNOG" id="COG1968">
    <property type="taxonomic scope" value="Bacteria"/>
</dbReference>
<dbReference type="HOGENOM" id="CLU_060296_1_0_6"/>
<dbReference type="OrthoDB" id="9808289at2"/>
<dbReference type="Proteomes" id="UP000009080">
    <property type="component" value="Chromosome"/>
</dbReference>
<dbReference type="GO" id="GO:0005886">
    <property type="term" value="C:plasma membrane"/>
    <property type="evidence" value="ECO:0007669"/>
    <property type="project" value="UniProtKB-SubCell"/>
</dbReference>
<dbReference type="GO" id="GO:0050380">
    <property type="term" value="F:undecaprenyl-diphosphatase activity"/>
    <property type="evidence" value="ECO:0007669"/>
    <property type="project" value="UniProtKB-UniRule"/>
</dbReference>
<dbReference type="GO" id="GO:0071555">
    <property type="term" value="P:cell wall organization"/>
    <property type="evidence" value="ECO:0007669"/>
    <property type="project" value="UniProtKB-KW"/>
</dbReference>
<dbReference type="GO" id="GO:0009252">
    <property type="term" value="P:peptidoglycan biosynthetic process"/>
    <property type="evidence" value="ECO:0007669"/>
    <property type="project" value="UniProtKB-KW"/>
</dbReference>
<dbReference type="GO" id="GO:0008360">
    <property type="term" value="P:regulation of cell shape"/>
    <property type="evidence" value="ECO:0007669"/>
    <property type="project" value="UniProtKB-KW"/>
</dbReference>
<dbReference type="GO" id="GO:0046677">
    <property type="term" value="P:response to antibiotic"/>
    <property type="evidence" value="ECO:0007669"/>
    <property type="project" value="UniProtKB-UniRule"/>
</dbReference>
<dbReference type="HAMAP" id="MF_01006">
    <property type="entry name" value="Undec_diphosphatase"/>
    <property type="match status" value="1"/>
</dbReference>
<dbReference type="InterPro" id="IPR003824">
    <property type="entry name" value="UppP"/>
</dbReference>
<dbReference type="NCBIfam" id="NF001393">
    <property type="entry name" value="PRK00281.2-4"/>
    <property type="match status" value="1"/>
</dbReference>
<dbReference type="NCBIfam" id="TIGR00753">
    <property type="entry name" value="undec_PP_bacA"/>
    <property type="match status" value="1"/>
</dbReference>
<dbReference type="PANTHER" id="PTHR30622">
    <property type="entry name" value="UNDECAPRENYL-DIPHOSPHATASE"/>
    <property type="match status" value="1"/>
</dbReference>
<dbReference type="PANTHER" id="PTHR30622:SF4">
    <property type="entry name" value="UNDECAPRENYL-DIPHOSPHATASE"/>
    <property type="match status" value="1"/>
</dbReference>
<dbReference type="Pfam" id="PF02673">
    <property type="entry name" value="BacA"/>
    <property type="match status" value="1"/>
</dbReference>
<accession>C5BRP6</accession>
<keyword id="KW-0046">Antibiotic resistance</keyword>
<keyword id="KW-0997">Cell inner membrane</keyword>
<keyword id="KW-1003">Cell membrane</keyword>
<keyword id="KW-0133">Cell shape</keyword>
<keyword id="KW-0961">Cell wall biogenesis/degradation</keyword>
<keyword id="KW-0378">Hydrolase</keyword>
<keyword id="KW-0472">Membrane</keyword>
<keyword id="KW-0573">Peptidoglycan synthesis</keyword>
<keyword id="KW-1185">Reference proteome</keyword>
<keyword id="KW-0812">Transmembrane</keyword>
<keyword id="KW-1133">Transmembrane helix</keyword>
<reference key="1">
    <citation type="journal article" date="2009" name="PLoS ONE">
        <title>The complete genome of Teredinibacter turnerae T7901: an intracellular endosymbiont of marine wood-boring bivalves (shipworms).</title>
        <authorList>
            <person name="Yang J.C."/>
            <person name="Madupu R."/>
            <person name="Durkin A.S."/>
            <person name="Ekborg N.A."/>
            <person name="Pedamallu C.S."/>
            <person name="Hostetler J.B."/>
            <person name="Radune D."/>
            <person name="Toms B.S."/>
            <person name="Henrissat B."/>
            <person name="Coutinho P.M."/>
            <person name="Schwarz S."/>
            <person name="Field L."/>
            <person name="Trindade-Silva A.E."/>
            <person name="Soares C.A.G."/>
            <person name="Elshahawi S."/>
            <person name="Hanora A."/>
            <person name="Schmidt E.W."/>
            <person name="Haygood M.G."/>
            <person name="Posfai J."/>
            <person name="Benner J."/>
            <person name="Madinger C."/>
            <person name="Nove J."/>
            <person name="Anton B."/>
            <person name="Chaudhary K."/>
            <person name="Foster J."/>
            <person name="Holman A."/>
            <person name="Kumar S."/>
            <person name="Lessard P.A."/>
            <person name="Luyten Y.A."/>
            <person name="Slatko B."/>
            <person name="Wood N."/>
            <person name="Wu B."/>
            <person name="Teplitski M."/>
            <person name="Mougous J.D."/>
            <person name="Ward N."/>
            <person name="Eisen J.A."/>
            <person name="Badger J.H."/>
            <person name="Distel D.L."/>
        </authorList>
    </citation>
    <scope>NUCLEOTIDE SEQUENCE [LARGE SCALE GENOMIC DNA]</scope>
    <source>
        <strain>ATCC 39867 / T7901</strain>
    </source>
</reference>
<sequence>MDLIHVVVLALIQGITEFLPISSSAHLILPKEILGWPDQGLAFDVAVHVGTLTAVAVYFRNDIGKIIIGWLSSVTGRGTDESGRLGWYLIAATIPAALFGLIFDDLIETHLRSTDVIATTTLVFGVLLWVADRKPAETKQLRDIALSTAMIIGLAQAVALIPGTSRSGITITAALFLGLCRTDAARFSFLLSIPVIVLSGGYKGLQLVLSAAAVDWLAIGLGIALSAVSAYICIHYFLNFINRIGMLPFVIYRLLLGVLLFIAV</sequence>
<feature type="chain" id="PRO_1000213161" description="Undecaprenyl-diphosphatase">
    <location>
        <begin position="1"/>
        <end position="264"/>
    </location>
</feature>
<feature type="transmembrane region" description="Helical" evidence="1">
    <location>
        <begin position="1"/>
        <end position="21"/>
    </location>
</feature>
<feature type="transmembrane region" description="Helical" evidence="1">
    <location>
        <begin position="39"/>
        <end position="59"/>
    </location>
</feature>
<feature type="transmembrane region" description="Helical" evidence="1">
    <location>
        <begin position="87"/>
        <end position="107"/>
    </location>
</feature>
<feature type="transmembrane region" description="Helical" evidence="1">
    <location>
        <begin position="111"/>
        <end position="131"/>
    </location>
</feature>
<feature type="transmembrane region" description="Helical" evidence="1">
    <location>
        <begin position="144"/>
        <end position="164"/>
    </location>
</feature>
<feature type="transmembrane region" description="Helical" evidence="1">
    <location>
        <begin position="187"/>
        <end position="207"/>
    </location>
</feature>
<feature type="transmembrane region" description="Helical" evidence="1">
    <location>
        <begin position="208"/>
        <end position="228"/>
    </location>
</feature>
<feature type="transmembrane region" description="Helical" evidence="1">
    <location>
        <begin position="244"/>
        <end position="264"/>
    </location>
</feature>
<protein>
    <recommendedName>
        <fullName evidence="1">Undecaprenyl-diphosphatase</fullName>
        <ecNumber evidence="1">3.6.1.27</ecNumber>
    </recommendedName>
    <alternativeName>
        <fullName evidence="1">Bacitracin resistance protein</fullName>
    </alternativeName>
    <alternativeName>
        <fullName evidence="1">Undecaprenyl pyrophosphate phosphatase</fullName>
    </alternativeName>
</protein>
<name>UPPP_TERTT</name>
<evidence type="ECO:0000255" key="1">
    <source>
        <dbReference type="HAMAP-Rule" id="MF_01006"/>
    </source>
</evidence>
<gene>
    <name evidence="1" type="primary">uppP</name>
    <name type="ordered locus">TERTU_1199</name>
</gene>
<comment type="function">
    <text evidence="1">Catalyzes the dephosphorylation of undecaprenyl diphosphate (UPP). Confers resistance to bacitracin.</text>
</comment>
<comment type="catalytic activity">
    <reaction evidence="1">
        <text>di-trans,octa-cis-undecaprenyl diphosphate + H2O = di-trans,octa-cis-undecaprenyl phosphate + phosphate + H(+)</text>
        <dbReference type="Rhea" id="RHEA:28094"/>
        <dbReference type="ChEBI" id="CHEBI:15377"/>
        <dbReference type="ChEBI" id="CHEBI:15378"/>
        <dbReference type="ChEBI" id="CHEBI:43474"/>
        <dbReference type="ChEBI" id="CHEBI:58405"/>
        <dbReference type="ChEBI" id="CHEBI:60392"/>
        <dbReference type="EC" id="3.6.1.27"/>
    </reaction>
</comment>
<comment type="subcellular location">
    <subcellularLocation>
        <location evidence="1">Cell inner membrane</location>
        <topology evidence="1">Multi-pass membrane protein</topology>
    </subcellularLocation>
</comment>
<comment type="miscellaneous">
    <text>Bacitracin is thought to be involved in the inhibition of peptidoglycan synthesis by sequestering undecaprenyl diphosphate, thereby reducing the pool of lipid carrier available.</text>
</comment>
<comment type="similarity">
    <text evidence="1">Belongs to the UppP family.</text>
</comment>